<accession>A4JCJ8</accession>
<name>RIMM_BURVG</name>
<reference key="1">
    <citation type="submission" date="2007-03" db="EMBL/GenBank/DDBJ databases">
        <title>Complete sequence of chromosome 1 of Burkholderia vietnamiensis G4.</title>
        <authorList>
            <consortium name="US DOE Joint Genome Institute"/>
            <person name="Copeland A."/>
            <person name="Lucas S."/>
            <person name="Lapidus A."/>
            <person name="Barry K."/>
            <person name="Detter J.C."/>
            <person name="Glavina del Rio T."/>
            <person name="Hammon N."/>
            <person name="Israni S."/>
            <person name="Dalin E."/>
            <person name="Tice H."/>
            <person name="Pitluck S."/>
            <person name="Chain P."/>
            <person name="Malfatti S."/>
            <person name="Shin M."/>
            <person name="Vergez L."/>
            <person name="Schmutz J."/>
            <person name="Larimer F."/>
            <person name="Land M."/>
            <person name="Hauser L."/>
            <person name="Kyrpides N."/>
            <person name="Tiedje J."/>
            <person name="Richardson P."/>
        </authorList>
    </citation>
    <scope>NUCLEOTIDE SEQUENCE [LARGE SCALE GENOMIC DNA]</scope>
    <source>
        <strain>G4 / LMG 22486</strain>
    </source>
</reference>
<comment type="function">
    <text evidence="1">An accessory protein needed during the final step in the assembly of 30S ribosomal subunit, possibly for assembly of the head region. Essential for efficient processing of 16S rRNA. May be needed both before and after RbfA during the maturation of 16S rRNA. It has affinity for free ribosomal 30S subunits but not for 70S ribosomes.</text>
</comment>
<comment type="subunit">
    <text evidence="1">Binds ribosomal protein uS19.</text>
</comment>
<comment type="subcellular location">
    <subcellularLocation>
        <location evidence="1">Cytoplasm</location>
    </subcellularLocation>
</comment>
<comment type="domain">
    <text evidence="1">The PRC barrel domain binds ribosomal protein uS19.</text>
</comment>
<comment type="similarity">
    <text evidence="1">Belongs to the RimM family.</text>
</comment>
<keyword id="KW-0143">Chaperone</keyword>
<keyword id="KW-0963">Cytoplasm</keyword>
<keyword id="KW-0690">Ribosome biogenesis</keyword>
<keyword id="KW-0698">rRNA processing</keyword>
<gene>
    <name evidence="1" type="primary">rimM</name>
    <name type="ordered locus">Bcep1808_0990</name>
</gene>
<organism>
    <name type="scientific">Burkholderia vietnamiensis (strain G4 / LMG 22486)</name>
    <name type="common">Burkholderia cepacia (strain R1808)</name>
    <dbReference type="NCBI Taxonomy" id="269482"/>
    <lineage>
        <taxon>Bacteria</taxon>
        <taxon>Pseudomonadati</taxon>
        <taxon>Pseudomonadota</taxon>
        <taxon>Betaproteobacteria</taxon>
        <taxon>Burkholderiales</taxon>
        <taxon>Burkholderiaceae</taxon>
        <taxon>Burkholderia</taxon>
        <taxon>Burkholderia cepacia complex</taxon>
    </lineage>
</organism>
<feature type="chain" id="PRO_0000351740" description="Ribosome maturation factor RimM">
    <location>
        <begin position="1"/>
        <end position="225"/>
    </location>
</feature>
<feature type="domain" description="PRC barrel" evidence="1">
    <location>
        <begin position="144"/>
        <end position="225"/>
    </location>
</feature>
<dbReference type="EMBL" id="CP000614">
    <property type="protein sequence ID" value="ABO54001.1"/>
    <property type="molecule type" value="Genomic_DNA"/>
</dbReference>
<dbReference type="SMR" id="A4JCJ8"/>
<dbReference type="KEGG" id="bvi:Bcep1808_0990"/>
<dbReference type="eggNOG" id="COG0806">
    <property type="taxonomic scope" value="Bacteria"/>
</dbReference>
<dbReference type="HOGENOM" id="CLU_077636_1_0_4"/>
<dbReference type="Proteomes" id="UP000002287">
    <property type="component" value="Chromosome 1"/>
</dbReference>
<dbReference type="GO" id="GO:0005737">
    <property type="term" value="C:cytoplasm"/>
    <property type="evidence" value="ECO:0007669"/>
    <property type="project" value="UniProtKB-SubCell"/>
</dbReference>
<dbReference type="GO" id="GO:0005840">
    <property type="term" value="C:ribosome"/>
    <property type="evidence" value="ECO:0007669"/>
    <property type="project" value="InterPro"/>
</dbReference>
<dbReference type="GO" id="GO:0043022">
    <property type="term" value="F:ribosome binding"/>
    <property type="evidence" value="ECO:0007669"/>
    <property type="project" value="InterPro"/>
</dbReference>
<dbReference type="GO" id="GO:0042274">
    <property type="term" value="P:ribosomal small subunit biogenesis"/>
    <property type="evidence" value="ECO:0007669"/>
    <property type="project" value="UniProtKB-UniRule"/>
</dbReference>
<dbReference type="GO" id="GO:0006364">
    <property type="term" value="P:rRNA processing"/>
    <property type="evidence" value="ECO:0007669"/>
    <property type="project" value="UniProtKB-UniRule"/>
</dbReference>
<dbReference type="Gene3D" id="2.30.30.240">
    <property type="entry name" value="PRC-barrel domain"/>
    <property type="match status" value="1"/>
</dbReference>
<dbReference type="Gene3D" id="2.40.30.60">
    <property type="entry name" value="RimM"/>
    <property type="match status" value="1"/>
</dbReference>
<dbReference type="HAMAP" id="MF_00014">
    <property type="entry name" value="Ribosome_mat_RimM"/>
    <property type="match status" value="1"/>
</dbReference>
<dbReference type="InterPro" id="IPR011033">
    <property type="entry name" value="PRC_barrel-like_sf"/>
</dbReference>
<dbReference type="InterPro" id="IPR056792">
    <property type="entry name" value="PRC_RimM"/>
</dbReference>
<dbReference type="InterPro" id="IPR011961">
    <property type="entry name" value="RimM"/>
</dbReference>
<dbReference type="InterPro" id="IPR002676">
    <property type="entry name" value="RimM_N"/>
</dbReference>
<dbReference type="InterPro" id="IPR036976">
    <property type="entry name" value="RimM_N_sf"/>
</dbReference>
<dbReference type="InterPro" id="IPR009000">
    <property type="entry name" value="Transl_B-barrel_sf"/>
</dbReference>
<dbReference type="NCBIfam" id="TIGR02273">
    <property type="entry name" value="16S_RimM"/>
    <property type="match status" value="1"/>
</dbReference>
<dbReference type="PANTHER" id="PTHR33692">
    <property type="entry name" value="RIBOSOME MATURATION FACTOR RIMM"/>
    <property type="match status" value="1"/>
</dbReference>
<dbReference type="PANTHER" id="PTHR33692:SF1">
    <property type="entry name" value="RIBOSOME MATURATION FACTOR RIMM"/>
    <property type="match status" value="1"/>
</dbReference>
<dbReference type="Pfam" id="PF24986">
    <property type="entry name" value="PRC_RimM"/>
    <property type="match status" value="1"/>
</dbReference>
<dbReference type="Pfam" id="PF01782">
    <property type="entry name" value="RimM"/>
    <property type="match status" value="1"/>
</dbReference>
<dbReference type="SUPFAM" id="SSF50346">
    <property type="entry name" value="PRC-barrel domain"/>
    <property type="match status" value="1"/>
</dbReference>
<dbReference type="SUPFAM" id="SSF50447">
    <property type="entry name" value="Translation proteins"/>
    <property type="match status" value="1"/>
</dbReference>
<proteinExistence type="inferred from homology"/>
<sequence length="225" mass="24206">MSGHDSGNARRGRASFGAFVRKPVERGAAASTGAAAEQGSLEAAQDWPDDAVEVGAVVDAYGLKGWIKVAAHADAGRGGDALLSARRWWLERGAERLSVRILQSKTHGDTVVAQPAGVDDRDAALAMRGFRVFVRREDFPALAADEFYWVDLIGLEVVNEQSVSLGKVSGMIDNGVHSILRVEYPTVGKDGAPATDERLIPFVGVYVKTVDQAARRIVVDWEADY</sequence>
<protein>
    <recommendedName>
        <fullName evidence="1">Ribosome maturation factor RimM</fullName>
    </recommendedName>
</protein>
<evidence type="ECO:0000255" key="1">
    <source>
        <dbReference type="HAMAP-Rule" id="MF_00014"/>
    </source>
</evidence>